<accession>B0RLE7</accession>
<accession>O34259</accession>
<feature type="chain" id="PRO_0000339184" description="Biopolymer transport protein exbD1">
    <location>
        <begin position="1"/>
        <end position="140"/>
    </location>
</feature>
<feature type="topological domain" description="Cytoplasmic" evidence="2">
    <location>
        <begin position="1"/>
        <end position="16"/>
    </location>
</feature>
<feature type="transmembrane region" description="Helical" evidence="2">
    <location>
        <begin position="17"/>
        <end position="37"/>
    </location>
</feature>
<feature type="topological domain" description="Periplasmic" evidence="2">
    <location>
        <begin position="38"/>
        <end position="140"/>
    </location>
</feature>
<keyword id="KW-0997">Cell inner membrane</keyword>
<keyword id="KW-1003">Cell membrane</keyword>
<keyword id="KW-0472">Membrane</keyword>
<keyword id="KW-0653">Protein transport</keyword>
<keyword id="KW-0812">Transmembrane</keyword>
<keyword id="KW-1133">Transmembrane helix</keyword>
<keyword id="KW-0813">Transport</keyword>
<proteinExistence type="inferred from homology"/>
<reference key="1">
    <citation type="journal article" date="1997" name="J. Bacteriol.">
        <title>Unusual structure of the tonB-exb DNA region of Xanthomonas campestris pv. campestris: tonB, exbB, and exbD1 are essential for ferric iron uptake, but exbD2 is not.</title>
        <authorList>
            <person name="Wiggerich H.G."/>
            <person name="Klauke B."/>
            <person name="Koeplin R."/>
            <person name="Priefer U.B."/>
            <person name="Puehler A."/>
        </authorList>
    </citation>
    <scope>NUCLEOTIDE SEQUENCE [GENOMIC DNA]</scope>
</reference>
<reference key="2">
    <citation type="journal article" date="2008" name="J. Biotechnol.">
        <title>The genome of Xanthomonas campestris pv. campestris B100 and its use for the reconstruction of metabolic pathways involved in xanthan biosynthesis.</title>
        <authorList>
            <person name="Vorhoelter F.-J."/>
            <person name="Schneiker S."/>
            <person name="Goesmann A."/>
            <person name="Krause L."/>
            <person name="Bekel T."/>
            <person name="Kaiser O."/>
            <person name="Linke B."/>
            <person name="Patschkowski T."/>
            <person name="Rueckert C."/>
            <person name="Schmid J."/>
            <person name="Sidhu V.K."/>
            <person name="Sieber V."/>
            <person name="Tauch A."/>
            <person name="Watt S.A."/>
            <person name="Weisshaar B."/>
            <person name="Becker A."/>
            <person name="Niehaus K."/>
            <person name="Puehler A."/>
        </authorList>
    </citation>
    <scope>NUCLEOTIDE SEQUENCE [LARGE SCALE GENOMIC DNA]</scope>
    <source>
        <strain>B100</strain>
    </source>
</reference>
<sequence length="140" mass="15215">MAFSSGNSGGPMADINVTPLVDVMLVLLIIFIITAPLMSHKVKVELPEANLIQKEDAEKRAAPITLAVKEDGSLYWNDEPISKEALESRLSTAAQQTPQPPLNLRGDRTTKMRTINEITKIAQGQGMLDVGFVATKEKGQ</sequence>
<protein>
    <recommendedName>
        <fullName>Biopolymer transport protein exbD1</fullName>
    </recommendedName>
</protein>
<comment type="function">
    <text evidence="1">Involved in the TonB-dependent energy-dependent transport of various receptor-bound substrates.</text>
</comment>
<comment type="subunit">
    <text evidence="1">The accessory proteins ExbB and ExbD seem to form a complex with TonB.</text>
</comment>
<comment type="subcellular location">
    <subcellularLocation>
        <location evidence="3">Cell inner membrane</location>
        <topology evidence="3">Single-pass type II membrane protein</topology>
    </subcellularLocation>
</comment>
<comment type="similarity">
    <text evidence="3">Belongs to the ExbD/TolR family.</text>
</comment>
<evidence type="ECO:0000250" key="1"/>
<evidence type="ECO:0000255" key="2"/>
<evidence type="ECO:0000305" key="3"/>
<gene>
    <name type="primary">exbD1</name>
    <name type="ordered locus">xcc-b100_0010</name>
</gene>
<organism>
    <name type="scientific">Xanthomonas campestris pv. campestris (strain B100)</name>
    <dbReference type="NCBI Taxonomy" id="509169"/>
    <lineage>
        <taxon>Bacteria</taxon>
        <taxon>Pseudomonadati</taxon>
        <taxon>Pseudomonadota</taxon>
        <taxon>Gammaproteobacteria</taxon>
        <taxon>Lysobacterales</taxon>
        <taxon>Lysobacteraceae</taxon>
        <taxon>Xanthomonas</taxon>
    </lineage>
</organism>
<dbReference type="EMBL" id="Z95386">
    <property type="protein sequence ID" value="CAB08608.1"/>
    <property type="molecule type" value="Genomic_DNA"/>
</dbReference>
<dbReference type="EMBL" id="AM920689">
    <property type="protein sequence ID" value="CAP49338.1"/>
    <property type="molecule type" value="Genomic_DNA"/>
</dbReference>
<dbReference type="SMR" id="B0RLE7"/>
<dbReference type="KEGG" id="xca:xcc-b100_0010"/>
<dbReference type="HOGENOM" id="CLU_085305_1_1_6"/>
<dbReference type="Proteomes" id="UP000001188">
    <property type="component" value="Chromosome"/>
</dbReference>
<dbReference type="GO" id="GO:0005886">
    <property type="term" value="C:plasma membrane"/>
    <property type="evidence" value="ECO:0007669"/>
    <property type="project" value="UniProtKB-SubCell"/>
</dbReference>
<dbReference type="GO" id="GO:0022857">
    <property type="term" value="F:transmembrane transporter activity"/>
    <property type="evidence" value="ECO:0007669"/>
    <property type="project" value="InterPro"/>
</dbReference>
<dbReference type="GO" id="GO:0015031">
    <property type="term" value="P:protein transport"/>
    <property type="evidence" value="ECO:0007669"/>
    <property type="project" value="UniProtKB-KW"/>
</dbReference>
<dbReference type="FunFam" id="3.30.420.270:FF:000006">
    <property type="entry name" value="Biopolymer transporter ExbD"/>
    <property type="match status" value="1"/>
</dbReference>
<dbReference type="Gene3D" id="3.30.420.270">
    <property type="match status" value="1"/>
</dbReference>
<dbReference type="InterPro" id="IPR003400">
    <property type="entry name" value="ExbD"/>
</dbReference>
<dbReference type="PANTHER" id="PTHR30558:SF12">
    <property type="entry name" value="BIOPOLYMER TRANSPORT PROTEIN EXBD"/>
    <property type="match status" value="1"/>
</dbReference>
<dbReference type="PANTHER" id="PTHR30558">
    <property type="entry name" value="EXBD MEMBRANE COMPONENT OF PMF-DRIVEN MACROMOLECULE IMPORT SYSTEM"/>
    <property type="match status" value="1"/>
</dbReference>
<dbReference type="Pfam" id="PF02472">
    <property type="entry name" value="ExbD"/>
    <property type="match status" value="1"/>
</dbReference>
<name>EXBD1_XANCB</name>